<accession>P04274</accession>
<protein>
    <recommendedName>
        <fullName>Beta-2 adrenergic receptor</fullName>
    </recommendedName>
    <alternativeName>
        <fullName>Beta-2 adrenoreceptor</fullName>
        <shortName>Beta-2 adrenoceptor</shortName>
    </alternativeName>
</protein>
<name>ADRB2_MESAU</name>
<comment type="function">
    <text evidence="6">Beta-adrenergic receptors mediate the catecholamine-induced activation of adenylate cyclase through the action of G proteins. The beta-2-adrenergic receptor binds epinephrine with an approximately 30-fold greater affinity than it does norepinephrine.</text>
</comment>
<comment type="subunit">
    <text evidence="2">Binds NHERF1 and GPRASP1. Interacts with ARRB1 and ARRB2. Interacts with SRC (By similarity). Interacts with USP20 and USP33 (By similarity). Interacts with VHL; the interaction, which is increased on hydroxylation of ADRB2, ubiquitinates ADRB2 leading to its degradation. Interacts with EGLN3; the interaction hydroxylates ADRB2 facilitating VHL-E3 ligase-mediated ubiquitination. Interacts (via PDZ-binding motif) with SNX27 (via PDZ domain); the interaction is required when endocytosed to prevent degradation in lysosomes and promote recycling to the plasma membrane. Interacts with CNIH4. Interacts with ARRDC3. Interacts with NEDD4 (By similarity). Interacts with MARCHF2 (By similarity).</text>
</comment>
<comment type="subcellular location">
    <subcellularLocation>
        <location evidence="6">Cell membrane</location>
        <topology evidence="2">Multi-pass membrane protein</topology>
    </subcellularLocation>
    <subcellularLocation>
        <location evidence="2">Early endosome</location>
    </subcellularLocation>
    <subcellularLocation>
        <location evidence="2">Golgi apparatus</location>
    </subcellularLocation>
    <text evidence="2">Colocalizes with VHL at the cell membrane. Activated receptors are internalized into endosomes prior to their degradation in lysosomes. Activated receptors are also detected within the Golgi apparatus.</text>
</comment>
<comment type="PTM">
    <text evidence="1">Palmitoylated; may reduce accessibility of Ser-345 and Ser-346 by anchoring Cys-341 to the plasma membrane. Agonist stimulation promotes depalmitoylation and further allows Ser-345 and Ser-346 phosphorylation (By similarity).</text>
</comment>
<comment type="PTM">
    <text evidence="1">Phosphorylated by PKA and BARK upon agonist stimulation, which mediates homologous desensitization of the receptor. PKA-mediated phosphorylation seems to facilitate phosphorylation by BARK (By similarity).</text>
</comment>
<comment type="PTM">
    <text evidence="1">Phosphorylation of Tyr-141 is induced by insulin and leads to supersensitization of the receptor.</text>
</comment>
<comment type="PTM">
    <text evidence="1">Polyubiquitinated. Agonist-induced ubiquitination leads to sort internalized receptors to the lysosomes for degradation. Deubiquitination by USP20 and USP33, leads to ADRB2 recycling and resensitization after prolonged agonist stimulation. USP20 and USP33 are constitutively associated and are dissociated immediately after agonist stimulation. Ubiquitination by the VHL-E3 ligase complex is oxygen-dependent (By similarity).</text>
</comment>
<comment type="PTM">
    <text evidence="1">Hydroxylation by EGLN3 occurs only under normoxia and increases the interaction with VHL and the subsequent ubiquitination and degradation of ADRB2.</text>
</comment>
<comment type="PTM">
    <text evidence="2">Palmitoylated. Mainly palmitoylated at Cys-341. Palmitoylation may reduce accessibility of phosphorylation sites by anchoring the receptor to the plasma membrane. Agonist stimulation promotes depalmitoylation and further allows Ser-345 and Ser-346 phosphorylation. Also undergoes transient, ligand-induced palmitoylation at Cys-265 probably by ZDHHC9, ZDHHC14 and ZDHHC18 within the Golgi. Palmitoylation at Cys-265 requires phosphorylation by PKA and receptor internalization and stabilizes the receptor. Could be depalmitoylated by LYPLA1 at the plasma membrane.</text>
</comment>
<comment type="similarity">
    <text evidence="4">Belongs to the G-protein coupled receptor 1 family. Adrenergic receptor subfamily. ADRB2 sub-subfamily.</text>
</comment>
<feature type="chain" id="PRO_0000069133" description="Beta-2 adrenergic receptor">
    <location>
        <begin position="1"/>
        <end position="418"/>
    </location>
</feature>
<feature type="topological domain" description="Extracellular" evidence="1">
    <location>
        <begin position="1"/>
        <end position="34"/>
    </location>
</feature>
<feature type="transmembrane region" description="Helical; Name=1" evidence="1">
    <location>
        <begin position="35"/>
        <end position="58"/>
    </location>
</feature>
<feature type="topological domain" description="Cytoplasmic" evidence="1">
    <location>
        <begin position="59"/>
        <end position="71"/>
    </location>
</feature>
<feature type="transmembrane region" description="Helical; Name=2" evidence="1">
    <location>
        <begin position="72"/>
        <end position="95"/>
    </location>
</feature>
<feature type="topological domain" description="Extracellular" evidence="1">
    <location>
        <begin position="96"/>
        <end position="106"/>
    </location>
</feature>
<feature type="transmembrane region" description="Helical; Name=3" evidence="1">
    <location>
        <begin position="107"/>
        <end position="129"/>
    </location>
</feature>
<feature type="topological domain" description="Cytoplasmic" evidence="1">
    <location>
        <begin position="130"/>
        <end position="150"/>
    </location>
</feature>
<feature type="transmembrane region" description="Helical; Name=4" evidence="1">
    <location>
        <begin position="151"/>
        <end position="174"/>
    </location>
</feature>
<feature type="topological domain" description="Extracellular" evidence="1">
    <location>
        <begin position="175"/>
        <end position="196"/>
    </location>
</feature>
<feature type="transmembrane region" description="Helical; Name=5" evidence="1">
    <location>
        <begin position="197"/>
        <end position="220"/>
    </location>
</feature>
<feature type="topological domain" description="Cytoplasmic" evidence="1">
    <location>
        <begin position="221"/>
        <end position="274"/>
    </location>
</feature>
<feature type="transmembrane region" description="Helical; Name=6" evidence="1">
    <location>
        <begin position="275"/>
        <end position="298"/>
    </location>
</feature>
<feature type="topological domain" description="Extracellular" evidence="1">
    <location>
        <begin position="299"/>
        <end position="305"/>
    </location>
</feature>
<feature type="transmembrane region" description="Helical; Name=7" evidence="1">
    <location>
        <begin position="306"/>
        <end position="329"/>
    </location>
</feature>
<feature type="topological domain" description="Cytoplasmic" evidence="1">
    <location>
        <begin position="330"/>
        <end position="418"/>
    </location>
</feature>
<feature type="region of interest" description="Disordered" evidence="5">
    <location>
        <begin position="394"/>
        <end position="418"/>
    </location>
</feature>
<feature type="short sequence motif" description="PDZ-binding">
    <location>
        <begin position="415"/>
        <end position="418"/>
    </location>
</feature>
<feature type="modified residue" description="Phosphotyrosine" evidence="2">
    <location>
        <position position="141"/>
    </location>
</feature>
<feature type="modified residue" description="Phosphoserine; by PKA" evidence="3">
    <location>
        <position position="261"/>
    </location>
</feature>
<feature type="modified residue" description="Phosphoserine; by PKA" evidence="3">
    <location>
        <position position="262"/>
    </location>
</feature>
<feature type="modified residue" description="Phosphoserine; by PKA" evidence="2">
    <location>
        <position position="345"/>
    </location>
</feature>
<feature type="modified residue" description="Phosphoserine; by PKA" evidence="2">
    <location>
        <position position="346"/>
    </location>
</feature>
<feature type="modified residue" description="Phosphoserine; by BARK" evidence="8">
    <location>
        <position position="355"/>
    </location>
</feature>
<feature type="modified residue" description="Phosphoserine; by BARK" evidence="8">
    <location>
        <position position="356"/>
    </location>
</feature>
<feature type="modified residue" description="4-hydroxyproline" evidence="1">
    <location>
        <position position="387"/>
    </location>
</feature>
<feature type="modified residue" description="4-hydroxyproline" evidence="1">
    <location>
        <position position="400"/>
    </location>
</feature>
<feature type="lipid moiety-binding region" description="S-palmitoyl cysteine" evidence="2">
    <location>
        <position position="265"/>
    </location>
</feature>
<feature type="lipid moiety-binding region" description="S-palmitoyl cysteine" evidence="2">
    <location>
        <position position="341"/>
    </location>
</feature>
<feature type="glycosylation site" description="N-linked (GlcNAc...) asparagine">
    <location>
        <position position="6"/>
    </location>
</feature>
<feature type="glycosylation site" description="N-linked (GlcNAc...) asparagine">
    <location>
        <position position="15"/>
    </location>
</feature>
<feature type="disulfide bond" evidence="4">
    <location>
        <begin position="106"/>
        <end position="191"/>
    </location>
</feature>
<feature type="disulfide bond" evidence="4">
    <location>
        <begin position="184"/>
        <end position="190"/>
    </location>
</feature>
<feature type="mutagenesis site" description="Small decrease in agonist binding. No effect on antagonist binding." evidence="7">
    <original>D</original>
    <variation>A</variation>
    <location>
        <position position="79"/>
    </location>
</feature>
<feature type="mutagenesis site" description="Drastic decrease in agonist and antagonist binding. Stimulates adenylyl cyclase activity." evidence="7">
    <original>D</original>
    <variation>A</variation>
    <location>
        <position position="113"/>
    </location>
</feature>
<feature type="mutagenesis site" description="Decrease in catechol agonist binding." evidence="6">
    <original>S</original>
    <variation>A</variation>
    <location>
        <position position="204"/>
    </location>
</feature>
<feature type="mutagenesis site" description="Decrease in catechol agonist binding." evidence="6">
    <original>S</original>
    <variation>A</variation>
    <location>
        <position position="207"/>
    </location>
</feature>
<keyword id="KW-1003">Cell membrane</keyword>
<keyword id="KW-1015">Disulfide bond</keyword>
<keyword id="KW-0967">Endosome</keyword>
<keyword id="KW-0297">G-protein coupled receptor</keyword>
<keyword id="KW-0325">Glycoprotein</keyword>
<keyword id="KW-0333">Golgi apparatus</keyword>
<keyword id="KW-0379">Hydroxylation</keyword>
<keyword id="KW-0449">Lipoprotein</keyword>
<keyword id="KW-0472">Membrane</keyword>
<keyword id="KW-0564">Palmitate</keyword>
<keyword id="KW-0597">Phosphoprotein</keyword>
<keyword id="KW-0675">Receptor</keyword>
<keyword id="KW-1185">Reference proteome</keyword>
<keyword id="KW-0807">Transducer</keyword>
<keyword id="KW-0812">Transmembrane</keyword>
<keyword id="KW-1133">Transmembrane helix</keyword>
<keyword id="KW-0832">Ubl conjugation</keyword>
<evidence type="ECO:0000250" key="1"/>
<evidence type="ECO:0000250" key="2">
    <source>
        <dbReference type="UniProtKB" id="P07550"/>
    </source>
</evidence>
<evidence type="ECO:0000255" key="3"/>
<evidence type="ECO:0000255" key="4">
    <source>
        <dbReference type="PROSITE-ProRule" id="PRU00521"/>
    </source>
</evidence>
<evidence type="ECO:0000256" key="5">
    <source>
        <dbReference type="SAM" id="MobiDB-lite"/>
    </source>
</evidence>
<evidence type="ECO:0000269" key="6">
    <source>
    </source>
</evidence>
<evidence type="ECO:0000269" key="7">
    <source>
    </source>
</evidence>
<evidence type="ECO:0000305" key="8"/>
<reference key="1">
    <citation type="journal article" date="1986" name="Nature">
        <title>Cloning of the gene and cDNA for mammalian beta-adrenergic receptor and homology with rhodopsin.</title>
        <authorList>
            <person name="Dixon R.A.F."/>
            <person name="Kobilka B.K."/>
            <person name="Strader D.J."/>
            <person name="Benovic J.L."/>
            <person name="Dohlman H.G."/>
            <person name="Frielle T."/>
            <person name="Bolanowski M.A."/>
            <person name="Bennett C.D."/>
            <person name="Rands E."/>
            <person name="Diehl R.E."/>
            <person name="Mumford R.A."/>
            <person name="Slater E.E."/>
            <person name="Sigal I.S."/>
            <person name="Caron M.G."/>
            <person name="Lefkowitz R.J."/>
            <person name="Strader C.D."/>
        </authorList>
    </citation>
    <scope>NUCLEOTIDE SEQUENCE [MRNA]</scope>
    <source>
        <tissue>Lung</tissue>
    </source>
</reference>
<reference key="2">
    <citation type="journal article" date="1990" name="J. Biol. Chem.">
        <title>Mutational analysis of beta-adrenergic receptor glycosylation.</title>
        <authorList>
            <person name="Rands E."/>
            <person name="Candelore M.R."/>
            <person name="Cheung A.H."/>
            <person name="Will W.S."/>
            <person name="Strader C.D."/>
            <person name="Dixon R.A.F."/>
        </authorList>
    </citation>
    <scope>MUTAGENESIS TO CONFIRM GLYCOSYLATION SITES</scope>
</reference>
<reference key="3">
    <citation type="journal article" date="1989" name="J. Biol. Chem.">
        <title>Identification of two serine residues involved in agonist activation of the beta-adrenergic receptor.</title>
        <authorList>
            <person name="Strader C.D."/>
            <person name="Candelore M.R."/>
            <person name="Hill W.S."/>
            <person name="Sigal I.S."/>
            <person name="Dixon R.A.F."/>
        </authorList>
    </citation>
    <scope>MUTAGENESIS OF SER-204 AND SER-207</scope>
    <scope>FUNCTION</scope>
    <scope>SUBCELLULAR LOCATION</scope>
</reference>
<reference key="4">
    <citation type="journal article" date="1988" name="J. Biol. Chem.">
        <title>Conserved aspartic acid residues 79 and 113 of the beta-adrenergic receptor have different roles in receptor function.</title>
        <authorList>
            <person name="Strader C.D."/>
            <person name="Sigal I.S."/>
            <person name="Candelore M.R."/>
            <person name="Rands E."/>
            <person name="Hill W.S."/>
            <person name="Dixon R.A.F."/>
        </authorList>
    </citation>
    <scope>MUTAGENESIS OF ASP-79 AND ASP-113</scope>
</reference>
<reference key="5">
    <citation type="journal article" date="1992" name="J. Mol. Biol.">
        <title>Three-dimensional structure for the beta 2 adrenergic receptor protein based on computer modeling studies.</title>
        <authorList>
            <person name="Huss K.M."/>
            <person name="Lybrand T.P."/>
        </authorList>
    </citation>
    <scope>3D-STRUCTURE MODELING</scope>
</reference>
<proteinExistence type="evidence at protein level"/>
<organism>
    <name type="scientific">Mesocricetus auratus</name>
    <name type="common">Golden hamster</name>
    <dbReference type="NCBI Taxonomy" id="10036"/>
    <lineage>
        <taxon>Eukaryota</taxon>
        <taxon>Metazoa</taxon>
        <taxon>Chordata</taxon>
        <taxon>Craniata</taxon>
        <taxon>Vertebrata</taxon>
        <taxon>Euteleostomi</taxon>
        <taxon>Mammalia</taxon>
        <taxon>Eutheria</taxon>
        <taxon>Euarchontoglires</taxon>
        <taxon>Glires</taxon>
        <taxon>Rodentia</taxon>
        <taxon>Myomorpha</taxon>
        <taxon>Muroidea</taxon>
        <taxon>Cricetidae</taxon>
        <taxon>Cricetinae</taxon>
        <taxon>Mesocricetus</taxon>
    </lineage>
</organism>
<sequence>MGPPGNDSDFLLTTNGSHVPDHDVTEERDEAWVVGMAILMSVIVLAIVFGNVLVITAIAKFERLQTVTNYFITSLACADLVMGLAVVPFGASHILMKMWNFGNFWCEFWTSIDVLCVTASIETLCVIAVDRYIAITSPFKYQSLLTKNKARMVILMVWIVSGLTSFLPIQMHWYRATHQKAIDCYHKETCCDFFTNQAYAIASSIVSFYVPLVVMVFVYSRVFQVAKRQLQKIDKSEGRFHSPNLGQVEQDGRSGHGLRRSSKFCLKEHKALKTLGIIMGTFTLCWLPFFIVNIVHVIQDNLIPKEVYILLNWLGYVNSAFNPLIYCRSPDFRIAFQELLCLRRSSSKAYGNGYSSNSNGKTDYMGEASGCQLGQEKESERLCEDPPGTESFVNCQGTVPSLSLDSQGRNCSTNDSPL</sequence>
<dbReference type="EMBL" id="X03804">
    <property type="protein sequence ID" value="CAA27430.1"/>
    <property type="molecule type" value="mRNA"/>
</dbReference>
<dbReference type="RefSeq" id="NP_001268877.1">
    <property type="nucleotide sequence ID" value="NM_001281948.1"/>
</dbReference>
<dbReference type="SMR" id="P04274"/>
<dbReference type="ELM" id="P04274"/>
<dbReference type="STRING" id="10036.ENSMAUP00000018942"/>
<dbReference type="ChEMBL" id="CHEMBL5943"/>
<dbReference type="DrugCentral" id="P04274"/>
<dbReference type="GlyCosmos" id="P04274">
    <property type="glycosylation" value="2 sites, No reported glycans"/>
</dbReference>
<dbReference type="iPTMnet" id="P04274"/>
<dbReference type="Ensembl" id="ENSMAUT00000022911">
    <property type="protein sequence ID" value="ENSMAUP00000018942"/>
    <property type="gene ID" value="ENSMAUG00000017373"/>
</dbReference>
<dbReference type="GeneID" id="101836719"/>
<dbReference type="KEGG" id="maua:101836719"/>
<dbReference type="CTD" id="154"/>
<dbReference type="eggNOG" id="KOG3656">
    <property type="taxonomic scope" value="Eukaryota"/>
</dbReference>
<dbReference type="OrthoDB" id="5975661at2759"/>
<dbReference type="PRO" id="PR:P04274"/>
<dbReference type="Proteomes" id="UP000189706">
    <property type="component" value="Unplaced"/>
</dbReference>
<dbReference type="GO" id="GO:0016324">
    <property type="term" value="C:apical plasma membrane"/>
    <property type="evidence" value="ECO:0007669"/>
    <property type="project" value="Ensembl"/>
</dbReference>
<dbReference type="GO" id="GO:0036064">
    <property type="term" value="C:ciliary basal body"/>
    <property type="evidence" value="ECO:0007669"/>
    <property type="project" value="Ensembl"/>
</dbReference>
<dbReference type="GO" id="GO:0005769">
    <property type="term" value="C:early endosome"/>
    <property type="evidence" value="ECO:0007669"/>
    <property type="project" value="UniProtKB-SubCell"/>
</dbReference>
<dbReference type="GO" id="GO:0005794">
    <property type="term" value="C:Golgi apparatus"/>
    <property type="evidence" value="ECO:0007669"/>
    <property type="project" value="UniProtKB-SubCell"/>
</dbReference>
<dbReference type="GO" id="GO:0045171">
    <property type="term" value="C:intercellular bridge"/>
    <property type="evidence" value="ECO:0007669"/>
    <property type="project" value="Ensembl"/>
</dbReference>
<dbReference type="GO" id="GO:0072686">
    <property type="term" value="C:mitotic spindle"/>
    <property type="evidence" value="ECO:0007669"/>
    <property type="project" value="Ensembl"/>
</dbReference>
<dbReference type="GO" id="GO:0098992">
    <property type="term" value="C:neuronal dense core vesicle"/>
    <property type="evidence" value="ECO:0007669"/>
    <property type="project" value="Ensembl"/>
</dbReference>
<dbReference type="GO" id="GO:0005634">
    <property type="term" value="C:nucleus"/>
    <property type="evidence" value="ECO:0007669"/>
    <property type="project" value="Ensembl"/>
</dbReference>
<dbReference type="GO" id="GO:0043235">
    <property type="term" value="C:receptor complex"/>
    <property type="evidence" value="ECO:0000250"/>
    <property type="project" value="HGNC-UCL"/>
</dbReference>
<dbReference type="GO" id="GO:0008179">
    <property type="term" value="F:adenylate cyclase binding"/>
    <property type="evidence" value="ECO:0007669"/>
    <property type="project" value="Ensembl"/>
</dbReference>
<dbReference type="GO" id="GO:0001540">
    <property type="term" value="F:amyloid-beta binding"/>
    <property type="evidence" value="ECO:0007669"/>
    <property type="project" value="Ensembl"/>
</dbReference>
<dbReference type="GO" id="GO:0004941">
    <property type="term" value="F:beta2-adrenergic receptor activity"/>
    <property type="evidence" value="ECO:0000250"/>
    <property type="project" value="HGNC-UCL"/>
</dbReference>
<dbReference type="GO" id="GO:0051380">
    <property type="term" value="F:norepinephrine binding"/>
    <property type="evidence" value="ECO:0000250"/>
    <property type="project" value="HGNC-UCL"/>
</dbReference>
<dbReference type="GO" id="GO:0015459">
    <property type="term" value="F:potassium channel regulator activity"/>
    <property type="evidence" value="ECO:0007669"/>
    <property type="project" value="Ensembl"/>
</dbReference>
<dbReference type="GO" id="GO:0042803">
    <property type="term" value="F:protein homodimerization activity"/>
    <property type="evidence" value="ECO:0000250"/>
    <property type="project" value="HGNC-UCL"/>
</dbReference>
<dbReference type="GO" id="GO:0044877">
    <property type="term" value="F:protein-containing complex binding"/>
    <property type="evidence" value="ECO:0007669"/>
    <property type="project" value="Ensembl"/>
</dbReference>
<dbReference type="GO" id="GO:0071880">
    <property type="term" value="P:adenylate cyclase-activating adrenergic receptor signaling pathway"/>
    <property type="evidence" value="ECO:0000250"/>
    <property type="project" value="HGNC-UCL"/>
</dbReference>
<dbReference type="GO" id="GO:0098990">
    <property type="term" value="P:AMPA selective glutamate receptor signaling pathway"/>
    <property type="evidence" value="ECO:0007669"/>
    <property type="project" value="Ensembl"/>
</dbReference>
<dbReference type="GO" id="GO:0045453">
    <property type="term" value="P:bone resorption"/>
    <property type="evidence" value="ECO:0007669"/>
    <property type="project" value="Ensembl"/>
</dbReference>
<dbReference type="GO" id="GO:0050873">
    <property type="term" value="P:brown fat cell differentiation"/>
    <property type="evidence" value="ECO:0007669"/>
    <property type="project" value="Ensembl"/>
</dbReference>
<dbReference type="GO" id="GO:1904646">
    <property type="term" value="P:cellular response to amyloid-beta"/>
    <property type="evidence" value="ECO:0007669"/>
    <property type="project" value="Ensembl"/>
</dbReference>
<dbReference type="GO" id="GO:0002024">
    <property type="term" value="P:diet induced thermogenesis"/>
    <property type="evidence" value="ECO:0007669"/>
    <property type="project" value="Ensembl"/>
</dbReference>
<dbReference type="GO" id="GO:0031649">
    <property type="term" value="P:heat generation"/>
    <property type="evidence" value="ECO:0007669"/>
    <property type="project" value="Ensembl"/>
</dbReference>
<dbReference type="GO" id="GO:0045744">
    <property type="term" value="P:negative regulation of G protein-coupled receptor signaling pathway"/>
    <property type="evidence" value="ECO:0000250"/>
    <property type="project" value="HGNC-UCL"/>
</dbReference>
<dbReference type="GO" id="GO:0040015">
    <property type="term" value="P:negative regulation of multicellular organism growth"/>
    <property type="evidence" value="ECO:0007669"/>
    <property type="project" value="Ensembl"/>
</dbReference>
<dbReference type="GO" id="GO:0045986">
    <property type="term" value="P:negative regulation of smooth muscle contraction"/>
    <property type="evidence" value="ECO:0007669"/>
    <property type="project" value="Ensembl"/>
</dbReference>
<dbReference type="GO" id="GO:0002025">
    <property type="term" value="P:norepinephrine-epinephrine-mediated vasodilation involved in regulation of systemic arterial blood pressure"/>
    <property type="evidence" value="ECO:0007669"/>
    <property type="project" value="Ensembl"/>
</dbReference>
<dbReference type="GO" id="GO:1901098">
    <property type="term" value="P:positive regulation of autophagosome maturation"/>
    <property type="evidence" value="ECO:0000250"/>
    <property type="project" value="GO_Central"/>
</dbReference>
<dbReference type="GO" id="GO:0030501">
    <property type="term" value="P:positive regulation of bone mineralization"/>
    <property type="evidence" value="ECO:0007669"/>
    <property type="project" value="Ensembl"/>
</dbReference>
<dbReference type="GO" id="GO:0141163">
    <property type="term" value="P:positive regulation of cAMP/PKA signal transduction"/>
    <property type="evidence" value="ECO:0007669"/>
    <property type="project" value="Ensembl"/>
</dbReference>
<dbReference type="GO" id="GO:0120162">
    <property type="term" value="P:positive regulation of cold-induced thermogenesis"/>
    <property type="evidence" value="ECO:0007669"/>
    <property type="project" value="Ensembl"/>
</dbReference>
<dbReference type="GO" id="GO:1904504">
    <property type="term" value="P:positive regulation of lipophagy"/>
    <property type="evidence" value="ECO:0000250"/>
    <property type="project" value="GO_Central"/>
</dbReference>
<dbReference type="GO" id="GO:0043410">
    <property type="term" value="P:positive regulation of MAPK cascade"/>
    <property type="evidence" value="ECO:0000250"/>
    <property type="project" value="HGNC-UCL"/>
</dbReference>
<dbReference type="GO" id="GO:0061885">
    <property type="term" value="P:positive regulation of mini excitatory postsynaptic potential"/>
    <property type="evidence" value="ECO:0007669"/>
    <property type="project" value="Ensembl"/>
</dbReference>
<dbReference type="GO" id="GO:0045944">
    <property type="term" value="P:positive regulation of transcription by RNA polymerase II"/>
    <property type="evidence" value="ECO:0007669"/>
    <property type="project" value="Ensembl"/>
</dbReference>
<dbReference type="GO" id="GO:0006898">
    <property type="term" value="P:receptor-mediated endocytosis"/>
    <property type="evidence" value="ECO:0000250"/>
    <property type="project" value="HGNC-UCL"/>
</dbReference>
<dbReference type="GO" id="GO:0002028">
    <property type="term" value="P:regulation of sodium ion transport"/>
    <property type="evidence" value="ECO:0007669"/>
    <property type="project" value="Ensembl"/>
</dbReference>
<dbReference type="GO" id="GO:0009409">
    <property type="term" value="P:response to cold"/>
    <property type="evidence" value="ECO:0007669"/>
    <property type="project" value="Ensembl"/>
</dbReference>
<dbReference type="GO" id="GO:0006939">
    <property type="term" value="P:smooth muscle contraction"/>
    <property type="evidence" value="ECO:0007669"/>
    <property type="project" value="Ensembl"/>
</dbReference>
<dbReference type="GO" id="GO:0006366">
    <property type="term" value="P:transcription by RNA polymerase II"/>
    <property type="evidence" value="ECO:0007669"/>
    <property type="project" value="Ensembl"/>
</dbReference>
<dbReference type="CDD" id="cd15957">
    <property type="entry name" value="7tmA_Beta2_AR"/>
    <property type="match status" value="1"/>
</dbReference>
<dbReference type="FunFam" id="1.20.1070.10:FF:000057">
    <property type="entry name" value="Beta-1 adrenergic receptor"/>
    <property type="match status" value="1"/>
</dbReference>
<dbReference type="Gene3D" id="1.20.1070.10">
    <property type="entry name" value="Rhodopsin 7-helix transmembrane proteins"/>
    <property type="match status" value="1"/>
</dbReference>
<dbReference type="InterPro" id="IPR002233">
    <property type="entry name" value="ADR_fam"/>
</dbReference>
<dbReference type="InterPro" id="IPR000332">
    <property type="entry name" value="ADRB2_rcpt"/>
</dbReference>
<dbReference type="InterPro" id="IPR000276">
    <property type="entry name" value="GPCR_Rhodpsn"/>
</dbReference>
<dbReference type="InterPro" id="IPR017452">
    <property type="entry name" value="GPCR_Rhodpsn_7TM"/>
</dbReference>
<dbReference type="PANTHER" id="PTHR24248">
    <property type="entry name" value="ADRENERGIC RECEPTOR-RELATED G-PROTEIN COUPLED RECEPTOR"/>
    <property type="match status" value="1"/>
</dbReference>
<dbReference type="PANTHER" id="PTHR24248:SF21">
    <property type="entry name" value="BETA-2 ADRENERGIC RECEPTOR"/>
    <property type="match status" value="1"/>
</dbReference>
<dbReference type="Pfam" id="PF00001">
    <property type="entry name" value="7tm_1"/>
    <property type="match status" value="1"/>
</dbReference>
<dbReference type="PRINTS" id="PR01103">
    <property type="entry name" value="ADRENERGICR"/>
</dbReference>
<dbReference type="PRINTS" id="PR00562">
    <property type="entry name" value="ADRENRGCB2AR"/>
</dbReference>
<dbReference type="PRINTS" id="PR00237">
    <property type="entry name" value="GPCRRHODOPSN"/>
</dbReference>
<dbReference type="SMART" id="SM01381">
    <property type="entry name" value="7TM_GPCR_Srsx"/>
    <property type="match status" value="1"/>
</dbReference>
<dbReference type="SUPFAM" id="SSF81321">
    <property type="entry name" value="Family A G protein-coupled receptor-like"/>
    <property type="match status" value="1"/>
</dbReference>
<dbReference type="PROSITE" id="PS00237">
    <property type="entry name" value="G_PROTEIN_RECEP_F1_1"/>
    <property type="match status" value="1"/>
</dbReference>
<dbReference type="PROSITE" id="PS50262">
    <property type="entry name" value="G_PROTEIN_RECEP_F1_2"/>
    <property type="match status" value="1"/>
</dbReference>
<gene>
    <name type="primary">ADRB2</name>
</gene>